<dbReference type="EC" id="2.5.1.89" evidence="1"/>
<dbReference type="EMBL" id="L77117">
    <property type="protein sequence ID" value="AAB99380.1"/>
    <property type="molecule type" value="Genomic_DNA"/>
</dbReference>
<dbReference type="PIR" id="C64471">
    <property type="entry name" value="C64471"/>
</dbReference>
<dbReference type="SMR" id="Q58767"/>
<dbReference type="FunCoup" id="Q58767">
    <property type="interactions" value="182"/>
</dbReference>
<dbReference type="STRING" id="243232.MJ_1372"/>
<dbReference type="PaxDb" id="243232-MJ_1372"/>
<dbReference type="EnsemblBacteria" id="AAB99380">
    <property type="protein sequence ID" value="AAB99380"/>
    <property type="gene ID" value="MJ_1372"/>
</dbReference>
<dbReference type="KEGG" id="mja:MJ_1372"/>
<dbReference type="eggNOG" id="arCOG01532">
    <property type="taxonomic scope" value="Archaea"/>
</dbReference>
<dbReference type="HOGENOM" id="CLU_038505_2_0_2"/>
<dbReference type="InParanoid" id="Q58767"/>
<dbReference type="PhylomeDB" id="Q58767"/>
<dbReference type="Proteomes" id="UP000000805">
    <property type="component" value="Chromosome"/>
</dbReference>
<dbReference type="GO" id="GO:0000287">
    <property type="term" value="F:magnesium ion binding"/>
    <property type="evidence" value="ECO:0007669"/>
    <property type="project" value="UniProtKB-UniRule"/>
</dbReference>
<dbReference type="GO" id="GO:0004659">
    <property type="term" value="F:prenyltransferase activity"/>
    <property type="evidence" value="ECO:0007669"/>
    <property type="project" value="UniProtKB-UniRule"/>
</dbReference>
<dbReference type="GO" id="GO:0016094">
    <property type="term" value="P:polyprenol biosynthetic process"/>
    <property type="evidence" value="ECO:0000318"/>
    <property type="project" value="GO_Central"/>
</dbReference>
<dbReference type="CDD" id="cd00475">
    <property type="entry name" value="Cis_IPPS"/>
    <property type="match status" value="1"/>
</dbReference>
<dbReference type="FunFam" id="3.40.1180.10:FF:000003">
    <property type="entry name" value="Isoprenyl transferase 2"/>
    <property type="match status" value="1"/>
</dbReference>
<dbReference type="Gene3D" id="3.40.1180.10">
    <property type="entry name" value="Decaprenyl diphosphate synthase-like"/>
    <property type="match status" value="1"/>
</dbReference>
<dbReference type="HAMAP" id="MF_01139">
    <property type="entry name" value="ISPT"/>
    <property type="match status" value="1"/>
</dbReference>
<dbReference type="InterPro" id="IPR001441">
    <property type="entry name" value="UPP_synth-like"/>
</dbReference>
<dbReference type="InterPro" id="IPR018520">
    <property type="entry name" value="UPP_synth-like_CS"/>
</dbReference>
<dbReference type="InterPro" id="IPR036424">
    <property type="entry name" value="UPP_synth-like_sf"/>
</dbReference>
<dbReference type="NCBIfam" id="TIGR00055">
    <property type="entry name" value="uppS"/>
    <property type="match status" value="1"/>
</dbReference>
<dbReference type="PANTHER" id="PTHR10291:SF43">
    <property type="entry name" value="DEHYDRODOLICHYL DIPHOSPHATE SYNTHASE COMPLEX SUBUNIT DHDDS"/>
    <property type="match status" value="1"/>
</dbReference>
<dbReference type="PANTHER" id="PTHR10291">
    <property type="entry name" value="DEHYDRODOLICHYL DIPHOSPHATE SYNTHASE FAMILY MEMBER"/>
    <property type="match status" value="1"/>
</dbReference>
<dbReference type="Pfam" id="PF01255">
    <property type="entry name" value="Prenyltransf"/>
    <property type="match status" value="1"/>
</dbReference>
<dbReference type="SUPFAM" id="SSF64005">
    <property type="entry name" value="Undecaprenyl diphosphate synthase"/>
    <property type="match status" value="1"/>
</dbReference>
<dbReference type="PROSITE" id="PS01066">
    <property type="entry name" value="UPP_SYNTHASE"/>
    <property type="match status" value="1"/>
</dbReference>
<protein>
    <recommendedName>
        <fullName evidence="1">Tritrans,polycis-undecaprenyl-diphosphate synthase (geranylgeranyl-diphosphate specific)</fullName>
        <ecNumber evidence="1">2.5.1.89</ecNumber>
    </recommendedName>
    <alternativeName>
        <fullName evidence="1">Undecaprenyl diphosphate synthase</fullName>
        <shortName evidence="1">UDS</shortName>
    </alternativeName>
    <alternativeName>
        <fullName evidence="1">Undecaprenyl pyrophosphate synthase</fullName>
        <shortName evidence="1">UPP synthase</shortName>
    </alternativeName>
</protein>
<sequence>MGILGKIKNKLKSIGKRVIIDFYRFLDNSGVLKIYEKILEEAIDKDNLPKHVAIIMDGNRRAAEIYGKDRYYGHYLGAEKVREVLRWARDLGINVVTLYAFSTENFRRPKEEVDKLMELFEKKFYEIADDEEIHRYEVRVRAIGRINLLPKNVQKAIKYAEERTKNYNKFFVNIAIAYGGQQEIIDAVKKIAEKVKRGEIEPEDIDKELIDKHLYTANLPFPNPDLIIRTSGEERISNFLIWQSSYSELYFCDIYWPLFRRVDFLRAVRDYQRRQRRFGK</sequence>
<comment type="function">
    <text evidence="1">Catalyzes the sequential condensation of isopentenyl diphosphate (IPP) with geranylgeranyl diphosphate (GGPP) to yield (2Z,6Z,10Z,14Z,18Z,22Z,26Z,30E,34E,38E)-undecaprenyl diphosphate (tritrans,heptacis-UPP). It is probably the precursor of glycosyl carrier lipids.</text>
</comment>
<comment type="catalytic activity">
    <reaction evidence="1">
        <text>geranylgeranyl diphosphate + 7 isopentenyl diphosphate = tri-trans,hepta-cis-undecaprenyl diphosphate + 7 diphosphate</text>
        <dbReference type="Rhea" id="RHEA:27622"/>
        <dbReference type="ChEBI" id="CHEBI:33019"/>
        <dbReference type="ChEBI" id="CHEBI:57533"/>
        <dbReference type="ChEBI" id="CHEBI:60388"/>
        <dbReference type="ChEBI" id="CHEBI:128769"/>
        <dbReference type="EC" id="2.5.1.89"/>
    </reaction>
</comment>
<comment type="cofactor">
    <cofactor evidence="1">
        <name>Mg(2+)</name>
        <dbReference type="ChEBI" id="CHEBI:18420"/>
    </cofactor>
    <text evidence="1">Binds 2 magnesium ions per subunit.</text>
</comment>
<comment type="subunit">
    <text evidence="1">Homodimer.</text>
</comment>
<comment type="similarity">
    <text evidence="1">Belongs to the UPP synthase family.</text>
</comment>
<organism>
    <name type="scientific">Methanocaldococcus jannaschii (strain ATCC 43067 / DSM 2661 / JAL-1 / JCM 10045 / NBRC 100440)</name>
    <name type="common">Methanococcus jannaschii</name>
    <dbReference type="NCBI Taxonomy" id="243232"/>
    <lineage>
        <taxon>Archaea</taxon>
        <taxon>Methanobacteriati</taxon>
        <taxon>Methanobacteriota</taxon>
        <taxon>Methanomada group</taxon>
        <taxon>Methanococci</taxon>
        <taxon>Methanococcales</taxon>
        <taxon>Methanocaldococcaceae</taxon>
        <taxon>Methanocaldococcus</taxon>
    </lineage>
</organism>
<keyword id="KW-0460">Magnesium</keyword>
<keyword id="KW-0479">Metal-binding</keyword>
<keyword id="KW-1185">Reference proteome</keyword>
<keyword id="KW-0808">Transferase</keyword>
<accession>Q58767</accession>
<evidence type="ECO:0000255" key="1">
    <source>
        <dbReference type="HAMAP-Rule" id="MF_01139"/>
    </source>
</evidence>
<name>UPPS_METJA</name>
<proteinExistence type="inferred from homology"/>
<feature type="chain" id="PRO_0000123731" description="Tritrans,polycis-undecaprenyl-diphosphate synthase (geranylgeranyl-diphosphate specific)">
    <location>
        <begin position="1"/>
        <end position="280"/>
    </location>
</feature>
<feature type="active site" evidence="1">
    <location>
        <position position="57"/>
    </location>
</feature>
<feature type="active site" description="Proton acceptor" evidence="1">
    <location>
        <position position="105"/>
    </location>
</feature>
<feature type="binding site" evidence="1">
    <location>
        <position position="57"/>
    </location>
    <ligand>
        <name>Mg(2+)</name>
        <dbReference type="ChEBI" id="CHEBI:18420"/>
    </ligand>
</feature>
<feature type="binding site" evidence="1">
    <location>
        <begin position="58"/>
        <end position="61"/>
    </location>
    <ligand>
        <name>substrate</name>
    </ligand>
</feature>
<feature type="binding site" evidence="1">
    <location>
        <position position="70"/>
    </location>
    <ligand>
        <name>substrate</name>
    </ligand>
</feature>
<feature type="binding site" evidence="1">
    <location>
        <position position="74"/>
    </location>
    <ligand>
        <name>substrate</name>
    </ligand>
</feature>
<feature type="binding site" evidence="1">
    <location>
        <begin position="102"/>
        <end position="104"/>
    </location>
    <ligand>
        <name>substrate</name>
    </ligand>
</feature>
<feature type="binding site" evidence="1">
    <location>
        <position position="106"/>
    </location>
    <ligand>
        <name>substrate</name>
    </ligand>
</feature>
<feature type="binding site" evidence="1">
    <location>
        <position position="108"/>
    </location>
    <ligand>
        <name>substrate</name>
    </ligand>
</feature>
<feature type="binding site" evidence="1">
    <location>
        <position position="229"/>
    </location>
    <ligand>
        <name>substrate</name>
    </ligand>
</feature>
<feature type="binding site" evidence="1">
    <location>
        <begin position="235"/>
        <end position="237"/>
    </location>
    <ligand>
        <name>substrate</name>
    </ligand>
</feature>
<feature type="binding site" evidence="1">
    <location>
        <position position="248"/>
    </location>
    <ligand>
        <name>Mg(2+)</name>
        <dbReference type="ChEBI" id="CHEBI:18420"/>
    </ligand>
</feature>
<gene>
    <name evidence="1" type="primary">uppS</name>
    <name type="ordered locus">MJ1372</name>
</gene>
<reference key="1">
    <citation type="journal article" date="1996" name="Science">
        <title>Complete genome sequence of the methanogenic archaeon, Methanococcus jannaschii.</title>
        <authorList>
            <person name="Bult C.J."/>
            <person name="White O."/>
            <person name="Olsen G.J."/>
            <person name="Zhou L."/>
            <person name="Fleischmann R.D."/>
            <person name="Sutton G.G."/>
            <person name="Blake J.A."/>
            <person name="FitzGerald L.M."/>
            <person name="Clayton R.A."/>
            <person name="Gocayne J.D."/>
            <person name="Kerlavage A.R."/>
            <person name="Dougherty B.A."/>
            <person name="Tomb J.-F."/>
            <person name="Adams M.D."/>
            <person name="Reich C.I."/>
            <person name="Overbeek R."/>
            <person name="Kirkness E.F."/>
            <person name="Weinstock K.G."/>
            <person name="Merrick J.M."/>
            <person name="Glodek A."/>
            <person name="Scott J.L."/>
            <person name="Geoghagen N.S.M."/>
            <person name="Weidman J.F."/>
            <person name="Fuhrmann J.L."/>
            <person name="Nguyen D."/>
            <person name="Utterback T.R."/>
            <person name="Kelley J.M."/>
            <person name="Peterson J.D."/>
            <person name="Sadow P.W."/>
            <person name="Hanna M.C."/>
            <person name="Cotton M.D."/>
            <person name="Roberts K.M."/>
            <person name="Hurst M.A."/>
            <person name="Kaine B.P."/>
            <person name="Borodovsky M."/>
            <person name="Klenk H.-P."/>
            <person name="Fraser C.M."/>
            <person name="Smith H.O."/>
            <person name="Woese C.R."/>
            <person name="Venter J.C."/>
        </authorList>
    </citation>
    <scope>NUCLEOTIDE SEQUENCE [LARGE SCALE GENOMIC DNA]</scope>
    <source>
        <strain>ATCC 43067 / DSM 2661 / JAL-1 / JCM 10045 / NBRC 100440</strain>
    </source>
</reference>